<comment type="subcellular location">
    <subcellularLocation>
        <location evidence="2">Cell membrane</location>
        <topology evidence="2">Multi-pass membrane protein</topology>
    </subcellularLocation>
</comment>
<comment type="similarity">
    <text evidence="2">To M.jannaschii MJ0795.1 and MJ1249.1.</text>
</comment>
<evidence type="ECO:0000255" key="1"/>
<evidence type="ECO:0000305" key="2"/>
<organism>
    <name type="scientific">Methanocaldococcus jannaschii (strain ATCC 43067 / DSM 2661 / JAL-1 / JCM 10045 / NBRC 100440)</name>
    <name type="common">Methanococcus jannaschii</name>
    <dbReference type="NCBI Taxonomy" id="243232"/>
    <lineage>
        <taxon>Archaea</taxon>
        <taxon>Methanobacteriati</taxon>
        <taxon>Methanobacteriota</taxon>
        <taxon>Methanomada group</taxon>
        <taxon>Methanococci</taxon>
        <taxon>Methanococcales</taxon>
        <taxon>Methanocaldococcaceae</taxon>
        <taxon>Methanocaldococcus</taxon>
    </lineage>
</organism>
<dbReference type="EMBL" id="L77117">
    <property type="protein sequence ID" value="AAB98790.1"/>
    <property type="molecule type" value="Genomic_DNA"/>
</dbReference>
<dbReference type="SMR" id="P81231"/>
<dbReference type="FunCoup" id="P81231">
    <property type="interactions" value="109"/>
</dbReference>
<dbReference type="STRING" id="243232.MJ_0785.1"/>
<dbReference type="PaxDb" id="243232-MJ_0785.1"/>
<dbReference type="EnsemblBacteria" id="AAB98790">
    <property type="protein sequence ID" value="AAB98790"/>
    <property type="gene ID" value="MJ_0785.1"/>
</dbReference>
<dbReference type="KEGG" id="mja:MJ_0785.1"/>
<dbReference type="HOGENOM" id="CLU_1431651_0_0_2"/>
<dbReference type="InParanoid" id="P81231"/>
<dbReference type="OrthoDB" id="382982at2157"/>
<dbReference type="Proteomes" id="UP000000805">
    <property type="component" value="Chromosome"/>
</dbReference>
<dbReference type="GO" id="GO:0005886">
    <property type="term" value="C:plasma membrane"/>
    <property type="evidence" value="ECO:0007669"/>
    <property type="project" value="UniProtKB-SubCell"/>
</dbReference>
<reference key="1">
    <citation type="journal article" date="1996" name="Science">
        <title>Complete genome sequence of the methanogenic archaeon, Methanococcus jannaschii.</title>
        <authorList>
            <person name="Bult C.J."/>
            <person name="White O."/>
            <person name="Olsen G.J."/>
            <person name="Zhou L."/>
            <person name="Fleischmann R.D."/>
            <person name="Sutton G.G."/>
            <person name="Blake J.A."/>
            <person name="FitzGerald L.M."/>
            <person name="Clayton R.A."/>
            <person name="Gocayne J.D."/>
            <person name="Kerlavage A.R."/>
            <person name="Dougherty B.A."/>
            <person name="Tomb J.-F."/>
            <person name="Adams M.D."/>
            <person name="Reich C.I."/>
            <person name="Overbeek R."/>
            <person name="Kirkness E.F."/>
            <person name="Weinstock K.G."/>
            <person name="Merrick J.M."/>
            <person name="Glodek A."/>
            <person name="Scott J.L."/>
            <person name="Geoghagen N.S.M."/>
            <person name="Weidman J.F."/>
            <person name="Fuhrmann J.L."/>
            <person name="Nguyen D."/>
            <person name="Utterback T.R."/>
            <person name="Kelley J.M."/>
            <person name="Peterson J.D."/>
            <person name="Sadow P.W."/>
            <person name="Hanna M.C."/>
            <person name="Cotton M.D."/>
            <person name="Roberts K.M."/>
            <person name="Hurst M.A."/>
            <person name="Kaine B.P."/>
            <person name="Borodovsky M."/>
            <person name="Klenk H.-P."/>
            <person name="Fraser C.M."/>
            <person name="Smith H.O."/>
            <person name="Woese C.R."/>
            <person name="Venter J.C."/>
        </authorList>
    </citation>
    <scope>NUCLEOTIDE SEQUENCE [LARGE SCALE GENOMIC DNA]</scope>
    <source>
        <strain>ATCC 43067 / DSM 2661 / JAL-1 / JCM 10045 / NBRC 100440</strain>
    </source>
</reference>
<name>Y78B_METJA</name>
<sequence>MENNKCGTMRGESVYLAYPFILGSVIFVEFFIFGLVYLTFGLGLKTIIITSGVILICLLPISIILIRLFIKSIAGKNKGKLIKKYTKLKILNKKYKILKVLLFIVGINFYLFGNLVSLNINPYTKFVLYSISAFFIIISIVVGDVIVEFYENGVFINPLGFYKWGEVGKEDLNDRLILKIDKLVIECKR</sequence>
<feature type="chain" id="PRO_0000107035" description="Uncharacterized protein MJ0785.1">
    <location>
        <begin position="1"/>
        <end position="189"/>
    </location>
</feature>
<feature type="transmembrane region" description="Helical" evidence="1">
    <location>
        <begin position="20"/>
        <end position="40"/>
    </location>
</feature>
<feature type="transmembrane region" description="Helical" evidence="1">
    <location>
        <begin position="46"/>
        <end position="66"/>
    </location>
</feature>
<feature type="transmembrane region" description="Helical" evidence="1">
    <location>
        <begin position="100"/>
        <end position="120"/>
    </location>
</feature>
<feature type="transmembrane region" description="Helical" evidence="1">
    <location>
        <begin position="126"/>
        <end position="146"/>
    </location>
</feature>
<gene>
    <name type="ordered locus">MJ0785.1</name>
</gene>
<accession>P81231</accession>
<keyword id="KW-1003">Cell membrane</keyword>
<keyword id="KW-0472">Membrane</keyword>
<keyword id="KW-1185">Reference proteome</keyword>
<keyword id="KW-0812">Transmembrane</keyword>
<keyword id="KW-1133">Transmembrane helix</keyword>
<proteinExistence type="predicted"/>
<protein>
    <recommendedName>
        <fullName>Uncharacterized protein MJ0785.1</fullName>
    </recommendedName>
</protein>